<organism>
    <name type="scientific">Salmonella typhi</name>
    <dbReference type="NCBI Taxonomy" id="90370"/>
    <lineage>
        <taxon>Bacteria</taxon>
        <taxon>Pseudomonadati</taxon>
        <taxon>Pseudomonadota</taxon>
        <taxon>Gammaproteobacteria</taxon>
        <taxon>Enterobacterales</taxon>
        <taxon>Enterobacteriaceae</taxon>
        <taxon>Salmonella</taxon>
    </lineage>
</organism>
<feature type="chain" id="PRO_0000211640" description="Chaperone protein TorD">
    <location>
        <begin position="1"/>
        <end position="210"/>
    </location>
</feature>
<gene>
    <name evidence="1" type="primary">torD</name>
    <name type="ordered locus">STY3957</name>
    <name type="ordered locus">t3697</name>
</gene>
<proteinExistence type="inferred from homology"/>
<evidence type="ECO:0000255" key="1">
    <source>
        <dbReference type="HAMAP-Rule" id="MF_01150"/>
    </source>
</evidence>
<keyword id="KW-0143">Chaperone</keyword>
<keyword id="KW-0963">Cytoplasm</keyword>
<protein>
    <recommendedName>
        <fullName evidence="1">Chaperone protein TorD</fullName>
    </recommendedName>
</protein>
<reference key="1">
    <citation type="journal article" date="2001" name="Nature">
        <title>Complete genome sequence of a multiple drug resistant Salmonella enterica serovar Typhi CT18.</title>
        <authorList>
            <person name="Parkhill J."/>
            <person name="Dougan G."/>
            <person name="James K.D."/>
            <person name="Thomson N.R."/>
            <person name="Pickard D."/>
            <person name="Wain J."/>
            <person name="Churcher C.M."/>
            <person name="Mungall K.L."/>
            <person name="Bentley S.D."/>
            <person name="Holden M.T.G."/>
            <person name="Sebaihia M."/>
            <person name="Baker S."/>
            <person name="Basham D."/>
            <person name="Brooks K."/>
            <person name="Chillingworth T."/>
            <person name="Connerton P."/>
            <person name="Cronin A."/>
            <person name="Davis P."/>
            <person name="Davies R.M."/>
            <person name="Dowd L."/>
            <person name="White N."/>
            <person name="Farrar J."/>
            <person name="Feltwell T."/>
            <person name="Hamlin N."/>
            <person name="Haque A."/>
            <person name="Hien T.T."/>
            <person name="Holroyd S."/>
            <person name="Jagels K."/>
            <person name="Krogh A."/>
            <person name="Larsen T.S."/>
            <person name="Leather S."/>
            <person name="Moule S."/>
            <person name="O'Gaora P."/>
            <person name="Parry C."/>
            <person name="Quail M.A."/>
            <person name="Rutherford K.M."/>
            <person name="Simmonds M."/>
            <person name="Skelton J."/>
            <person name="Stevens K."/>
            <person name="Whitehead S."/>
            <person name="Barrell B.G."/>
        </authorList>
    </citation>
    <scope>NUCLEOTIDE SEQUENCE [LARGE SCALE GENOMIC DNA]</scope>
    <source>
        <strain>CT18</strain>
    </source>
</reference>
<reference key="2">
    <citation type="journal article" date="2003" name="J. Bacteriol.">
        <title>Comparative genomics of Salmonella enterica serovar Typhi strains Ty2 and CT18.</title>
        <authorList>
            <person name="Deng W."/>
            <person name="Liou S.-R."/>
            <person name="Plunkett G. III"/>
            <person name="Mayhew G.F."/>
            <person name="Rose D.J."/>
            <person name="Burland V."/>
            <person name="Kodoyianni V."/>
            <person name="Schwartz D.C."/>
            <person name="Blattner F.R."/>
        </authorList>
    </citation>
    <scope>NUCLEOTIDE SEQUENCE [LARGE SCALE GENOMIC DNA]</scope>
    <source>
        <strain>ATCC 700931 / Ty2</strain>
    </source>
</reference>
<sequence length="210" mass="23798">MIKQPALAQEQYACVYAWLALLFFREVDDEGLIQLQSAEIADWLALLKRQPALAASVALLEQKIAALSLRQDAQLELAADFCGLFLMTDKKSALPYASQYPQQEPGMIKHLLLEAGMEVNDDFKEPADHLAIYLELLSHLHFSLGESFQQRRMNKLRQKTLSSLLEWLPEFTNNCLKHDPYGFYAALSQLLLAIVRFDDGKEDLSIVAVE</sequence>
<dbReference type="EMBL" id="AL513382">
    <property type="protein sequence ID" value="CAD03173.1"/>
    <property type="molecule type" value="Genomic_DNA"/>
</dbReference>
<dbReference type="EMBL" id="AE014613">
    <property type="protein sequence ID" value="AAO71192.1"/>
    <property type="molecule type" value="Genomic_DNA"/>
</dbReference>
<dbReference type="RefSeq" id="NP_458118.1">
    <property type="nucleotide sequence ID" value="NC_003198.1"/>
</dbReference>
<dbReference type="RefSeq" id="WP_000595416.1">
    <property type="nucleotide sequence ID" value="NZ_WSUR01000056.1"/>
</dbReference>
<dbReference type="SMR" id="Q8Z2M3"/>
<dbReference type="STRING" id="220341.gene:17587816"/>
<dbReference type="KEGG" id="stt:t3697"/>
<dbReference type="KEGG" id="sty:STY3957"/>
<dbReference type="PATRIC" id="fig|220341.7.peg.4043"/>
<dbReference type="eggNOG" id="COG3381">
    <property type="taxonomic scope" value="Bacteria"/>
</dbReference>
<dbReference type="HOGENOM" id="CLU_077650_4_0_6"/>
<dbReference type="OMA" id="PYASMYI"/>
<dbReference type="OrthoDB" id="7849731at2"/>
<dbReference type="Proteomes" id="UP000000541">
    <property type="component" value="Chromosome"/>
</dbReference>
<dbReference type="Proteomes" id="UP000002670">
    <property type="component" value="Chromosome"/>
</dbReference>
<dbReference type="GO" id="GO:0005737">
    <property type="term" value="C:cytoplasm"/>
    <property type="evidence" value="ECO:0007669"/>
    <property type="project" value="UniProtKB-SubCell"/>
</dbReference>
<dbReference type="GO" id="GO:0051259">
    <property type="term" value="P:protein complex oligomerization"/>
    <property type="evidence" value="ECO:0007669"/>
    <property type="project" value="InterPro"/>
</dbReference>
<dbReference type="GO" id="GO:0006457">
    <property type="term" value="P:protein folding"/>
    <property type="evidence" value="ECO:0007669"/>
    <property type="project" value="UniProtKB-UniRule"/>
</dbReference>
<dbReference type="Gene3D" id="1.20.120.1820">
    <property type="match status" value="1"/>
</dbReference>
<dbReference type="Gene3D" id="1.20.1280.20">
    <property type="entry name" value="HscB, C-terminal domain"/>
    <property type="match status" value="1"/>
</dbReference>
<dbReference type="HAMAP" id="MF_01150">
    <property type="entry name" value="TorD"/>
    <property type="match status" value="1"/>
</dbReference>
<dbReference type="InterPro" id="IPR023069">
    <property type="entry name" value="Chaperone_TorD"/>
</dbReference>
<dbReference type="InterPro" id="IPR020945">
    <property type="entry name" value="DMSO/NO3_reduct_chaperone"/>
</dbReference>
<dbReference type="InterPro" id="IPR036386">
    <property type="entry name" value="HscB_C_sf"/>
</dbReference>
<dbReference type="InterPro" id="IPR036411">
    <property type="entry name" value="TorD-like_sf"/>
</dbReference>
<dbReference type="InterPro" id="IPR050289">
    <property type="entry name" value="TorD/DmsD_chaperones"/>
</dbReference>
<dbReference type="NCBIfam" id="NF003442">
    <property type="entry name" value="PRK04976.1"/>
    <property type="match status" value="1"/>
</dbReference>
<dbReference type="PANTHER" id="PTHR34227:SF11">
    <property type="entry name" value="CHAPERONE PROTEIN TORD"/>
    <property type="match status" value="1"/>
</dbReference>
<dbReference type="PANTHER" id="PTHR34227">
    <property type="entry name" value="CHAPERONE PROTEIN YCDY"/>
    <property type="match status" value="1"/>
</dbReference>
<dbReference type="Pfam" id="PF02613">
    <property type="entry name" value="Nitrate_red_del"/>
    <property type="match status" value="1"/>
</dbReference>
<dbReference type="SUPFAM" id="SSF89155">
    <property type="entry name" value="TorD-like"/>
    <property type="match status" value="1"/>
</dbReference>
<name>TORD_SALTI</name>
<accession>Q8Z2M3</accession>
<comment type="function">
    <text evidence="1">Involved in the biogenesis of TorA. Acts on TorA before the insertion of the molybdenum cofactor and, as a result, probably favors a conformation of the apoenzyme that is competent for acquiring the cofactor.</text>
</comment>
<comment type="subcellular location">
    <subcellularLocation>
        <location evidence="1">Cytoplasm</location>
    </subcellularLocation>
</comment>
<comment type="similarity">
    <text evidence="1">Belongs to the TorD/DmsD family. TorD subfamily.</text>
</comment>